<proteinExistence type="inferred from homology"/>
<comment type="function">
    <text evidence="1">May have a photoreceptor function. Binds DNA; probably functions as a transcriptional repressor (By similarity).</text>
</comment>
<comment type="cofactor">
    <cofactor evidence="1">
        <name>FAD</name>
        <dbReference type="ChEBI" id="CHEBI:57692"/>
    </cofactor>
    <text evidence="1">Binds 1 FAD per subunit.</text>
</comment>
<comment type="cofactor">
    <cofactor evidence="1">
        <name>(6R)-5,10-methylene-5,6,7,8-tetrahydrofolate</name>
        <dbReference type="ChEBI" id="CHEBI:15636"/>
    </cofactor>
    <text evidence="1">Binds 1 5,10-methenyltetrahydrofolate (MTHF) per subunit.</text>
</comment>
<comment type="similarity">
    <text evidence="3">Belongs to the DNA photolyase class-1 family.</text>
</comment>
<gene>
    <name type="primary">cry</name>
    <name type="synonym">phr2</name>
    <name type="ordered locus">NP_3456A</name>
</gene>
<sequence length="474" mass="53666">MDTAVVWFRDDLRVTDNPTLADAVAAAETVIPVYTFDPDRYTESEYGPPKTGGHRAVFRRQAVADLRASLRDRGGDLLVRSGRPATVVPELAQRAGADAVYAQTKPATEERRRAADVASALDDAGIALRQRWTHTLYHPDDLPTPPTDIDDTFTPWRKETEAAATVRDPRSAPETVPTPDGLTPGPVPTVESLGVSEPPTDDRAVLEFEGGESAGKRRVESYIWEGDHLREYKTTRNGLLGADYSSKFSPWLAAGCLSPRWLHREVERYEDERVANEDTYWLVFELAWRDFFQFQFEKYGATFFKPGGIRERNIDWDRDRALFERWADGETGVPFVDANMRELNRTGYMSNRGRQNVASFLAGVLGIDWRWGAAYFEARLIDYDVASNWGNWAYQAGVGNDSRDRYFDVRSQAERYDSDAEYITTWLPELAALPATIAHQPWQLSEAEQREYGVELGVDYPEPVVDIDARYQSL</sequence>
<protein>
    <recommendedName>
        <fullName>Cryptochrome DASH</fullName>
    </recommendedName>
</protein>
<keyword id="KW-0157">Chromophore</keyword>
<keyword id="KW-0238">DNA-binding</keyword>
<keyword id="KW-0274">FAD</keyword>
<keyword id="KW-0285">Flavoprotein</keyword>
<keyword id="KW-1185">Reference proteome</keyword>
<keyword id="KW-0678">Repressor</keyword>
<keyword id="KW-0804">Transcription</keyword>
<keyword id="KW-0805">Transcription regulation</keyword>
<feature type="chain" id="PRO_0000235315" description="Cryptochrome DASH">
    <location>
        <begin position="1"/>
        <end position="474"/>
    </location>
</feature>
<feature type="domain" description="Photolyase/cryptochrome alpha/beta">
    <location>
        <begin position="2"/>
        <end position="136"/>
    </location>
</feature>
<feature type="region of interest" description="Disordered" evidence="2">
    <location>
        <begin position="161"/>
        <end position="202"/>
    </location>
</feature>
<feature type="compositionally biased region" description="Basic and acidic residues" evidence="2">
    <location>
        <begin position="161"/>
        <end position="171"/>
    </location>
</feature>
<evidence type="ECO:0000250" key="1"/>
<evidence type="ECO:0000256" key="2">
    <source>
        <dbReference type="SAM" id="MobiDB-lite"/>
    </source>
</evidence>
<evidence type="ECO:0000305" key="3"/>
<organism>
    <name type="scientific">Natronomonas pharaonis (strain ATCC 35678 / DSM 2160 / CIP 103997 / JCM 8858 / NBRC 14720 / NCIMB 2260 / Gabara)</name>
    <name type="common">Halobacterium pharaonis</name>
    <dbReference type="NCBI Taxonomy" id="348780"/>
    <lineage>
        <taxon>Archaea</taxon>
        <taxon>Methanobacteriati</taxon>
        <taxon>Methanobacteriota</taxon>
        <taxon>Stenosarchaea group</taxon>
        <taxon>Halobacteria</taxon>
        <taxon>Halobacteriales</taxon>
        <taxon>Haloarculaceae</taxon>
        <taxon>Natronomonas</taxon>
    </lineage>
</organism>
<name>CRYD_NATPD</name>
<dbReference type="EMBL" id="CR936257">
    <property type="protein sequence ID" value="CAI49819.1"/>
    <property type="molecule type" value="Genomic_DNA"/>
</dbReference>
<dbReference type="RefSeq" id="WP_011323439.1">
    <property type="nucleotide sequence ID" value="NC_007426.1"/>
</dbReference>
<dbReference type="SMR" id="Q3IPX9"/>
<dbReference type="STRING" id="348780.NP_3456A"/>
<dbReference type="EnsemblBacteria" id="CAI49819">
    <property type="protein sequence ID" value="CAI49819"/>
    <property type="gene ID" value="NP_3456A"/>
</dbReference>
<dbReference type="GeneID" id="3703032"/>
<dbReference type="KEGG" id="nph:NP_3456A"/>
<dbReference type="eggNOG" id="arCOG02840">
    <property type="taxonomic scope" value="Archaea"/>
</dbReference>
<dbReference type="HOGENOM" id="CLU_010348_6_2_2"/>
<dbReference type="OrthoDB" id="11721at2157"/>
<dbReference type="Proteomes" id="UP000002698">
    <property type="component" value="Chromosome"/>
</dbReference>
<dbReference type="GO" id="GO:0003904">
    <property type="term" value="F:deoxyribodipyrimidine photo-lyase activity"/>
    <property type="evidence" value="ECO:0007669"/>
    <property type="project" value="TreeGrafter"/>
</dbReference>
<dbReference type="GO" id="GO:0003677">
    <property type="term" value="F:DNA binding"/>
    <property type="evidence" value="ECO:0007669"/>
    <property type="project" value="UniProtKB-KW"/>
</dbReference>
<dbReference type="GO" id="GO:0071949">
    <property type="term" value="F:FAD binding"/>
    <property type="evidence" value="ECO:0007669"/>
    <property type="project" value="TreeGrafter"/>
</dbReference>
<dbReference type="GO" id="GO:0000719">
    <property type="term" value="P:photoreactive repair"/>
    <property type="evidence" value="ECO:0007669"/>
    <property type="project" value="TreeGrafter"/>
</dbReference>
<dbReference type="Gene3D" id="1.25.40.80">
    <property type="match status" value="1"/>
</dbReference>
<dbReference type="Gene3D" id="1.10.579.10">
    <property type="entry name" value="DNA Cyclobutane Dipyrimidine Photolyase, subunit A, domain 3"/>
    <property type="match status" value="1"/>
</dbReference>
<dbReference type="Gene3D" id="3.40.50.620">
    <property type="entry name" value="HUPs"/>
    <property type="match status" value="1"/>
</dbReference>
<dbReference type="InterPro" id="IPR014133">
    <property type="entry name" value="Cry_DASH"/>
</dbReference>
<dbReference type="InterPro" id="IPR036134">
    <property type="entry name" value="Crypto/Photolyase_FAD-like_sf"/>
</dbReference>
<dbReference type="InterPro" id="IPR036155">
    <property type="entry name" value="Crypto/Photolyase_N_sf"/>
</dbReference>
<dbReference type="InterPro" id="IPR005101">
    <property type="entry name" value="Cryptochr/Photolyase_FAD-bd"/>
</dbReference>
<dbReference type="InterPro" id="IPR002081">
    <property type="entry name" value="Cryptochrome/DNA_photolyase_1"/>
</dbReference>
<dbReference type="InterPro" id="IPR006050">
    <property type="entry name" value="DNA_photolyase_N"/>
</dbReference>
<dbReference type="InterPro" id="IPR014729">
    <property type="entry name" value="Rossmann-like_a/b/a_fold"/>
</dbReference>
<dbReference type="NCBIfam" id="TIGR02765">
    <property type="entry name" value="crypto_DASH"/>
    <property type="match status" value="1"/>
</dbReference>
<dbReference type="PANTHER" id="PTHR11455">
    <property type="entry name" value="CRYPTOCHROME"/>
    <property type="match status" value="1"/>
</dbReference>
<dbReference type="PANTHER" id="PTHR11455:SF22">
    <property type="entry name" value="CRYPTOCHROME DASH"/>
    <property type="match status" value="1"/>
</dbReference>
<dbReference type="Pfam" id="PF00875">
    <property type="entry name" value="DNA_photolyase"/>
    <property type="match status" value="1"/>
</dbReference>
<dbReference type="Pfam" id="PF03441">
    <property type="entry name" value="FAD_binding_7"/>
    <property type="match status" value="1"/>
</dbReference>
<dbReference type="PRINTS" id="PR00147">
    <property type="entry name" value="DNAPHOTLYASE"/>
</dbReference>
<dbReference type="SUPFAM" id="SSF48173">
    <property type="entry name" value="Cryptochrome/photolyase FAD-binding domain"/>
    <property type="match status" value="1"/>
</dbReference>
<dbReference type="SUPFAM" id="SSF52425">
    <property type="entry name" value="Cryptochrome/photolyase, N-terminal domain"/>
    <property type="match status" value="1"/>
</dbReference>
<dbReference type="PROSITE" id="PS51645">
    <property type="entry name" value="PHR_CRY_ALPHA_BETA"/>
    <property type="match status" value="1"/>
</dbReference>
<accession>Q3IPX9</accession>
<reference key="1">
    <citation type="journal article" date="2005" name="Genome Res.">
        <title>Living with two extremes: conclusions from the genome sequence of Natronomonas pharaonis.</title>
        <authorList>
            <person name="Falb M."/>
            <person name="Pfeiffer F."/>
            <person name="Palm P."/>
            <person name="Rodewald K."/>
            <person name="Hickmann V."/>
            <person name="Tittor J."/>
            <person name="Oesterhelt D."/>
        </authorList>
    </citation>
    <scope>NUCLEOTIDE SEQUENCE [LARGE SCALE GENOMIC DNA]</scope>
    <source>
        <strain>ATCC 35678 / DSM 2160 / CIP 103997 / JCM 8858 / NBRC 14720 / NCIMB 2260 / Gabara</strain>
    </source>
</reference>